<evidence type="ECO:0000255" key="1">
    <source>
        <dbReference type="HAMAP-Rule" id="MF_01196"/>
    </source>
</evidence>
<evidence type="ECO:0000256" key="2">
    <source>
        <dbReference type="SAM" id="MobiDB-lite"/>
    </source>
</evidence>
<organism>
    <name type="scientific">Shigella flexneri</name>
    <dbReference type="NCBI Taxonomy" id="623"/>
    <lineage>
        <taxon>Bacteria</taxon>
        <taxon>Pseudomonadati</taxon>
        <taxon>Pseudomonadota</taxon>
        <taxon>Gammaproteobacteria</taxon>
        <taxon>Enterobacterales</taxon>
        <taxon>Enterobacteriaceae</taxon>
        <taxon>Shigella</taxon>
    </lineage>
</organism>
<proteinExistence type="inferred from homology"/>
<protein>
    <recommendedName>
        <fullName evidence="1">Cell division protein ZapB</fullName>
    </recommendedName>
</protein>
<comment type="function">
    <text evidence="1">Non-essential, abundant cell division factor that is required for proper Z-ring formation. It is recruited early to the divisome by direct interaction with FtsZ, stimulating Z-ring assembly and thereby promoting cell division earlier in the cell cycle. Its recruitment to the Z-ring requires functional FtsA or ZipA.</text>
</comment>
<comment type="subunit">
    <text evidence="1">Homodimer. The ends of the coiled-coil dimer bind to each other, forming polymers. Interacts with FtsZ.</text>
</comment>
<comment type="subcellular location">
    <subcellularLocation>
        <location>Cytoplasm</location>
    </subcellularLocation>
    <text evidence="1">Localizes to the septum at mid-cell, in a FtsZ-like pattern.</text>
</comment>
<comment type="similarity">
    <text evidence="1">Belongs to the ZapB family.</text>
</comment>
<name>ZAPB_SHIFL</name>
<keyword id="KW-0007">Acetylation</keyword>
<keyword id="KW-0131">Cell cycle</keyword>
<keyword id="KW-0132">Cell division</keyword>
<keyword id="KW-0175">Coiled coil</keyword>
<keyword id="KW-0963">Cytoplasm</keyword>
<keyword id="KW-1185">Reference proteome</keyword>
<keyword id="KW-0717">Septation</keyword>
<gene>
    <name evidence="1" type="primary">zapB</name>
    <name type="synonym">yiiU</name>
    <name type="ordered locus">SF4006</name>
    <name type="ordered locus">S3741</name>
</gene>
<dbReference type="EMBL" id="AE005674">
    <property type="protein sequence ID" value="AAN45439.2"/>
    <property type="molecule type" value="Genomic_DNA"/>
</dbReference>
<dbReference type="EMBL" id="AE014073">
    <property type="protein sequence ID" value="AAP18761.1"/>
    <property type="molecule type" value="Genomic_DNA"/>
</dbReference>
<dbReference type="RefSeq" id="NP_709732.2">
    <property type="nucleotide sequence ID" value="NC_004337.2"/>
</dbReference>
<dbReference type="RefSeq" id="WP_001296623.1">
    <property type="nucleotide sequence ID" value="NZ_WPGW01000012.1"/>
</dbReference>
<dbReference type="SMR" id="P0AF39"/>
<dbReference type="STRING" id="198214.SF4006"/>
<dbReference type="PaxDb" id="198214-SF4006"/>
<dbReference type="GeneID" id="1027362"/>
<dbReference type="GeneID" id="93777970"/>
<dbReference type="KEGG" id="sfl:SF4006"/>
<dbReference type="KEGG" id="sfx:S3741"/>
<dbReference type="PATRIC" id="fig|198214.7.peg.4721"/>
<dbReference type="HOGENOM" id="CLU_171174_2_0_6"/>
<dbReference type="Proteomes" id="UP000001006">
    <property type="component" value="Chromosome"/>
</dbReference>
<dbReference type="Proteomes" id="UP000002673">
    <property type="component" value="Chromosome"/>
</dbReference>
<dbReference type="GO" id="GO:0005737">
    <property type="term" value="C:cytoplasm"/>
    <property type="evidence" value="ECO:0007669"/>
    <property type="project" value="UniProtKB-SubCell"/>
</dbReference>
<dbReference type="GO" id="GO:0000917">
    <property type="term" value="P:division septum assembly"/>
    <property type="evidence" value="ECO:0007669"/>
    <property type="project" value="UniProtKB-KW"/>
</dbReference>
<dbReference type="GO" id="GO:0043093">
    <property type="term" value="P:FtsZ-dependent cytokinesis"/>
    <property type="evidence" value="ECO:0007669"/>
    <property type="project" value="UniProtKB-UniRule"/>
</dbReference>
<dbReference type="FunFam" id="1.20.5.340:FF:000014">
    <property type="entry name" value="Cell division protein ZapB"/>
    <property type="match status" value="1"/>
</dbReference>
<dbReference type="Gene3D" id="1.20.5.340">
    <property type="match status" value="1"/>
</dbReference>
<dbReference type="HAMAP" id="MF_01196">
    <property type="entry name" value="ZapB"/>
    <property type="match status" value="1"/>
</dbReference>
<dbReference type="InterPro" id="IPR009252">
    <property type="entry name" value="Cell_div_ZapB"/>
</dbReference>
<dbReference type="NCBIfam" id="NF011951">
    <property type="entry name" value="PRK15422.1"/>
    <property type="match status" value="1"/>
</dbReference>
<dbReference type="Pfam" id="PF06005">
    <property type="entry name" value="ZapB"/>
    <property type="match status" value="1"/>
</dbReference>
<feature type="chain" id="PRO_0000169696" description="Cell division protein ZapB">
    <location>
        <begin position="1"/>
        <end position="81"/>
    </location>
</feature>
<feature type="region of interest" description="Disordered" evidence="2">
    <location>
        <begin position="36"/>
        <end position="67"/>
    </location>
</feature>
<feature type="coiled-coil region" evidence="1">
    <location>
        <begin position="5"/>
        <end position="81"/>
    </location>
</feature>
<feature type="compositionally biased region" description="Polar residues" evidence="2">
    <location>
        <begin position="37"/>
        <end position="47"/>
    </location>
</feature>
<feature type="compositionally biased region" description="Basic and acidic residues" evidence="2">
    <location>
        <begin position="48"/>
        <end position="62"/>
    </location>
</feature>
<feature type="modified residue" description="N6-acetyllysine" evidence="1">
    <location>
        <position position="10"/>
    </location>
</feature>
<accession>P0AF39</accession>
<accession>P32164</accession>
<reference key="1">
    <citation type="journal article" date="2002" name="Nucleic Acids Res.">
        <title>Genome sequence of Shigella flexneri 2a: insights into pathogenicity through comparison with genomes of Escherichia coli K12 and O157.</title>
        <authorList>
            <person name="Jin Q."/>
            <person name="Yuan Z."/>
            <person name="Xu J."/>
            <person name="Wang Y."/>
            <person name="Shen Y."/>
            <person name="Lu W."/>
            <person name="Wang J."/>
            <person name="Liu H."/>
            <person name="Yang J."/>
            <person name="Yang F."/>
            <person name="Zhang X."/>
            <person name="Zhang J."/>
            <person name="Yang G."/>
            <person name="Wu H."/>
            <person name="Qu D."/>
            <person name="Dong J."/>
            <person name="Sun L."/>
            <person name="Xue Y."/>
            <person name="Zhao A."/>
            <person name="Gao Y."/>
            <person name="Zhu J."/>
            <person name="Kan B."/>
            <person name="Ding K."/>
            <person name="Chen S."/>
            <person name="Cheng H."/>
            <person name="Yao Z."/>
            <person name="He B."/>
            <person name="Chen R."/>
            <person name="Ma D."/>
            <person name="Qiang B."/>
            <person name="Wen Y."/>
            <person name="Hou Y."/>
            <person name="Yu J."/>
        </authorList>
    </citation>
    <scope>NUCLEOTIDE SEQUENCE [LARGE SCALE GENOMIC DNA]</scope>
    <source>
        <strain>301 / Serotype 2a</strain>
    </source>
</reference>
<reference key="2">
    <citation type="journal article" date="2003" name="Infect. Immun.">
        <title>Complete genome sequence and comparative genomics of Shigella flexneri serotype 2a strain 2457T.</title>
        <authorList>
            <person name="Wei J."/>
            <person name="Goldberg M.B."/>
            <person name="Burland V."/>
            <person name="Venkatesan M.M."/>
            <person name="Deng W."/>
            <person name="Fournier G."/>
            <person name="Mayhew G.F."/>
            <person name="Plunkett G. III"/>
            <person name="Rose D.J."/>
            <person name="Darling A."/>
            <person name="Mau B."/>
            <person name="Perna N.T."/>
            <person name="Payne S.M."/>
            <person name="Runyen-Janecky L.J."/>
            <person name="Zhou S."/>
            <person name="Schwartz D.C."/>
            <person name="Blattner F.R."/>
        </authorList>
    </citation>
    <scope>NUCLEOTIDE SEQUENCE [LARGE SCALE GENOMIC DNA]</scope>
    <source>
        <strain>ATCC 700930 / 2457T / Serotype 2a</strain>
    </source>
</reference>
<sequence>MTMSLEVFEKLEAKVQQAIDTITLLQMEIEELKEKNNSLSQEVQNAQHQREELERENNHLKEQQNGWQERLQALLGRMEEV</sequence>